<reference key="1">
    <citation type="journal article" date="1986" name="Mol. Gen. Genet.">
        <title>Nucleotide sequence of the nifLA operon of Klebsiella oxytoca NG13 and characterization of the gene products.</title>
        <authorList>
            <person name="Kim Y.-M."/>
            <person name="Ahn K.-J."/>
            <person name="Beppu T."/>
            <person name="Uozumi T."/>
        </authorList>
    </citation>
    <scope>NUCLEOTIDE SEQUENCE [GENOMIC DNA]</scope>
    <source>
        <strain>NG13</strain>
    </source>
</reference>
<name>NIFB_KLEOX</name>
<sequence length="137" mass="14719">MTSCSSFSGGKACRPADDSALTPLVADKAAAHPCYSRNGHHRFARMHLPVAPACNLQCNYCNRKFDCSNESRPGVSSTLLTPEQAVVKVRQVAQAIPQLSVVGIAGPGDPLANIARTFRTLELIREQLPDLKLCLST</sequence>
<dbReference type="EC" id="4.-.-.-"/>
<dbReference type="EMBL" id="D00339">
    <property type="protein sequence ID" value="BAA20957.1"/>
    <property type="molecule type" value="Genomic_DNA"/>
</dbReference>
<dbReference type="SMR" id="P56265"/>
<dbReference type="STRING" id="571.AB185_16950"/>
<dbReference type="eggNOG" id="COG0535">
    <property type="taxonomic scope" value="Bacteria"/>
</dbReference>
<dbReference type="UniPathway" id="UPA00782"/>
<dbReference type="GO" id="GO:0051539">
    <property type="term" value="F:4 iron, 4 sulfur cluster binding"/>
    <property type="evidence" value="ECO:0007669"/>
    <property type="project" value="UniProtKB-KW"/>
</dbReference>
<dbReference type="GO" id="GO:0016829">
    <property type="term" value="F:lyase activity"/>
    <property type="evidence" value="ECO:0007669"/>
    <property type="project" value="UniProtKB-KW"/>
</dbReference>
<dbReference type="GO" id="GO:0046872">
    <property type="term" value="F:metal ion binding"/>
    <property type="evidence" value="ECO:0007669"/>
    <property type="project" value="UniProtKB-KW"/>
</dbReference>
<dbReference type="GO" id="GO:0009399">
    <property type="term" value="P:nitrogen fixation"/>
    <property type="evidence" value="ECO:0007669"/>
    <property type="project" value="UniProtKB-KW"/>
</dbReference>
<dbReference type="Gene3D" id="3.20.20.70">
    <property type="entry name" value="Aldolase class I"/>
    <property type="match status" value="1"/>
</dbReference>
<dbReference type="InterPro" id="IPR013785">
    <property type="entry name" value="Aldolase_TIM"/>
</dbReference>
<dbReference type="InterPro" id="IPR000385">
    <property type="entry name" value="MoaA_NifB_PqqE_Fe-S-bd_CS"/>
</dbReference>
<dbReference type="InterPro" id="IPR007197">
    <property type="entry name" value="rSAM"/>
</dbReference>
<dbReference type="PANTHER" id="PTHR43787:SF13">
    <property type="entry name" value="FEMO COFACTOR BIOSYNTHESIS PROTEIN NIFB"/>
    <property type="match status" value="1"/>
</dbReference>
<dbReference type="PANTHER" id="PTHR43787">
    <property type="entry name" value="FEMO COFACTOR BIOSYNTHESIS PROTEIN NIFB-RELATED"/>
    <property type="match status" value="1"/>
</dbReference>
<dbReference type="SFLD" id="SFLDS00029">
    <property type="entry name" value="Radical_SAM"/>
    <property type="match status" value="1"/>
</dbReference>
<dbReference type="SUPFAM" id="SSF102114">
    <property type="entry name" value="Radical SAM enzymes"/>
    <property type="match status" value="1"/>
</dbReference>
<dbReference type="PROSITE" id="PS01305">
    <property type="entry name" value="MOAA_NIFB_PQQE"/>
    <property type="match status" value="1"/>
</dbReference>
<dbReference type="PROSITE" id="PS51918">
    <property type="entry name" value="RADICAL_SAM"/>
    <property type="match status" value="1"/>
</dbReference>
<proteinExistence type="inferred from homology"/>
<evidence type="ECO:0000250" key="1">
    <source>
        <dbReference type="UniProtKB" id="D5VRM1"/>
    </source>
</evidence>
<evidence type="ECO:0000250" key="2">
    <source>
        <dbReference type="UniProtKB" id="P69848"/>
    </source>
</evidence>
<evidence type="ECO:0000255" key="3">
    <source>
        <dbReference type="PROSITE-ProRule" id="PRU01266"/>
    </source>
</evidence>
<evidence type="ECO:0000305" key="4"/>
<organism>
    <name type="scientific">Klebsiella oxytoca</name>
    <dbReference type="NCBI Taxonomy" id="571"/>
    <lineage>
        <taxon>Bacteria</taxon>
        <taxon>Pseudomonadati</taxon>
        <taxon>Pseudomonadota</taxon>
        <taxon>Gammaproteobacteria</taxon>
        <taxon>Enterobacterales</taxon>
        <taxon>Enterobacteriaceae</taxon>
        <taxon>Klebsiella/Raoultella group</taxon>
        <taxon>Klebsiella</taxon>
    </lineage>
</organism>
<comment type="function">
    <text evidence="1">Involved in the biosynthesis of the iron-molybdenum cofactor (FeMo-co or M-cluster) found in the dinitrogenase enzyme of the nitrogenase complex in nitrogen-fixing microorganisms. NifB catalyzes the crucial step of radical SAM-dependent carbide insertion that occurs concomitant with the insertion of a 9th sulfur and the rearrangement/coupling of two [4Fe-4S] clusters into a [8Fe-9S-C] cluster, the precursor to the M-cluster.</text>
</comment>
<comment type="cofactor">
    <cofactor evidence="1">
        <name>[4Fe-4S] cluster</name>
        <dbReference type="ChEBI" id="CHEBI:49883"/>
    </cofactor>
    <text evidence="1">Binds 3 [4Fe-4S] clusters per monomer. One cluster is coordinated with 3 cysteines and an exchangeable S-adenosyl-L-methionine. The two others probably act as substrate.</text>
</comment>
<comment type="pathway">
    <text evidence="1">Cofactor biosynthesis; Fe-Mo cofactor biosynthesis.</text>
</comment>
<comment type="similarity">
    <text evidence="4">Belongs to the radical SAM superfamily. NifB family.</text>
</comment>
<gene>
    <name type="primary">nifB</name>
</gene>
<keyword id="KW-0004">4Fe-4S</keyword>
<keyword id="KW-0408">Iron</keyword>
<keyword id="KW-0411">Iron-sulfur</keyword>
<keyword id="KW-0456">Lyase</keyword>
<keyword id="KW-0479">Metal-binding</keyword>
<keyword id="KW-0535">Nitrogen fixation</keyword>
<keyword id="KW-0949">S-adenosyl-L-methionine</keyword>
<accession>P56265</accession>
<feature type="chain" id="PRO_0000153040" description="FeMo cofactor biosynthesis protein NifB">
    <location>
        <begin position="1"/>
        <end position="137" status="greater than"/>
    </location>
</feature>
<feature type="domain" description="Radical SAM core" evidence="3">
    <location>
        <begin position="40"/>
        <end position="137" status="greater than"/>
    </location>
</feature>
<feature type="binding site" evidence="2">
    <location>
        <position position="54"/>
    </location>
    <ligand>
        <name>[4Fe-4S] cluster</name>
        <dbReference type="ChEBI" id="CHEBI:49883"/>
        <label>1</label>
        <note>4Fe-4S-S-AdoMet</note>
    </ligand>
</feature>
<feature type="binding site" evidence="2">
    <location>
        <position position="58"/>
    </location>
    <ligand>
        <name>[4Fe-4S] cluster</name>
        <dbReference type="ChEBI" id="CHEBI:49883"/>
        <label>1</label>
        <note>4Fe-4S-S-AdoMet</note>
    </ligand>
</feature>
<feature type="binding site" evidence="2">
    <location>
        <position position="60"/>
    </location>
    <ligand>
        <name>S-adenosyl-L-methionine</name>
        <dbReference type="ChEBI" id="CHEBI:59789"/>
    </ligand>
</feature>
<feature type="binding site" evidence="2">
    <location>
        <position position="61"/>
    </location>
    <ligand>
        <name>[4Fe-4S] cluster</name>
        <dbReference type="ChEBI" id="CHEBI:49883"/>
        <label>1</label>
        <note>4Fe-4S-S-AdoMet</note>
    </ligand>
</feature>
<feature type="binding site" evidence="2">
    <location>
        <position position="108"/>
    </location>
    <ligand>
        <name>S-adenosyl-L-methionine</name>
        <dbReference type="ChEBI" id="CHEBI:59789"/>
    </ligand>
</feature>
<feature type="non-terminal residue">
    <location>
        <position position="137"/>
    </location>
</feature>
<protein>
    <recommendedName>
        <fullName>FeMo cofactor biosynthesis protein NifB</fullName>
        <ecNumber>4.-.-.-</ecNumber>
    </recommendedName>
    <alternativeName>
        <fullName>Nitrogenase cofactor maturase NifB</fullName>
    </alternativeName>
    <alternativeName>
        <fullName>Radical SAM assemblase NifB</fullName>
    </alternativeName>
</protein>